<comment type="catalytic activity">
    <reaction>
        <text>tRNA(Val) + L-valine + ATP = L-valyl-tRNA(Val) + AMP + diphosphate</text>
        <dbReference type="Rhea" id="RHEA:10704"/>
        <dbReference type="Rhea" id="RHEA-COMP:9672"/>
        <dbReference type="Rhea" id="RHEA-COMP:9708"/>
        <dbReference type="ChEBI" id="CHEBI:30616"/>
        <dbReference type="ChEBI" id="CHEBI:33019"/>
        <dbReference type="ChEBI" id="CHEBI:57762"/>
        <dbReference type="ChEBI" id="CHEBI:78442"/>
        <dbReference type="ChEBI" id="CHEBI:78537"/>
        <dbReference type="ChEBI" id="CHEBI:456215"/>
        <dbReference type="EC" id="6.1.1.9"/>
    </reaction>
</comment>
<comment type="subcellular location">
    <subcellularLocation>
        <location evidence="2">Mitochondrion</location>
    </subcellularLocation>
</comment>
<comment type="similarity">
    <text evidence="3">Belongs to the class-I aminoacyl-tRNA synthetase family.</text>
</comment>
<proteinExistence type="inferred from homology"/>
<feature type="transit peptide" description="Mitochondrion">
    <location>
        <begin position="1"/>
        <end position="90"/>
    </location>
</feature>
<feature type="chain" id="PRO_0000352849" description="Valine--tRNA ligase, mitochondrial">
    <location>
        <begin position="91"/>
        <end position="950"/>
    </location>
</feature>
<feature type="short sequence motif" description="'HIGH' region">
    <location>
        <begin position="67"/>
        <end position="77"/>
    </location>
</feature>
<feature type="short sequence motif" description="'KMSKS' region">
    <location>
        <begin position="556"/>
        <end position="560"/>
    </location>
</feature>
<feature type="binding site" evidence="1">
    <location>
        <position position="559"/>
    </location>
    <ligand>
        <name>ATP</name>
        <dbReference type="ChEBI" id="CHEBI:30616"/>
    </ligand>
</feature>
<evidence type="ECO:0000250" key="1"/>
<evidence type="ECO:0000269" key="2">
    <source>
    </source>
</evidence>
<evidence type="ECO:0000305" key="3"/>
<keyword id="KW-0030">Aminoacyl-tRNA synthetase</keyword>
<keyword id="KW-0067">ATP-binding</keyword>
<keyword id="KW-0436">Ligase</keyword>
<keyword id="KW-0496">Mitochondrion</keyword>
<keyword id="KW-0547">Nucleotide-binding</keyword>
<keyword id="KW-0648">Protein biosynthesis</keyword>
<keyword id="KW-1185">Reference proteome</keyword>
<keyword id="KW-0809">Transit peptide</keyword>
<dbReference type="EC" id="6.1.1.9"/>
<dbReference type="EMBL" id="CU329670">
    <property type="protein sequence ID" value="CAB38577.1"/>
    <property type="molecule type" value="Genomic_DNA"/>
</dbReference>
<dbReference type="PIR" id="T38777">
    <property type="entry name" value="T38777"/>
</dbReference>
<dbReference type="SMR" id="O14160"/>
<dbReference type="BioGRID" id="280018">
    <property type="interactions" value="2"/>
</dbReference>
<dbReference type="FunCoup" id="O14160">
    <property type="interactions" value="442"/>
</dbReference>
<dbReference type="STRING" id="284812.O14160"/>
<dbReference type="PaxDb" id="4896-SPAC4A8.08c.1"/>
<dbReference type="EnsemblFungi" id="SPAC4A8.08c.1">
    <property type="protein sequence ID" value="SPAC4A8.08c.1:pep"/>
    <property type="gene ID" value="SPAC4A8.08c"/>
</dbReference>
<dbReference type="KEGG" id="spo:2543603"/>
<dbReference type="PomBase" id="SPAC4A8.08c"/>
<dbReference type="VEuPathDB" id="FungiDB:SPAC4A8.08c"/>
<dbReference type="eggNOG" id="KOG0432">
    <property type="taxonomic scope" value="Eukaryota"/>
</dbReference>
<dbReference type="HOGENOM" id="CLU_001493_0_2_1"/>
<dbReference type="InParanoid" id="O14160"/>
<dbReference type="OMA" id="FWIARMA"/>
<dbReference type="PhylomeDB" id="O14160"/>
<dbReference type="BRENDA" id="6.1.1.9">
    <property type="organism ID" value="5613"/>
</dbReference>
<dbReference type="PRO" id="PR:O14160"/>
<dbReference type="Proteomes" id="UP000002485">
    <property type="component" value="Chromosome I"/>
</dbReference>
<dbReference type="GO" id="GO:0005829">
    <property type="term" value="C:cytosol"/>
    <property type="evidence" value="ECO:0000318"/>
    <property type="project" value="GO_Central"/>
</dbReference>
<dbReference type="GO" id="GO:0005759">
    <property type="term" value="C:mitochondrial matrix"/>
    <property type="evidence" value="ECO:0000305"/>
    <property type="project" value="PomBase"/>
</dbReference>
<dbReference type="GO" id="GO:0005739">
    <property type="term" value="C:mitochondrion"/>
    <property type="evidence" value="ECO:0007005"/>
    <property type="project" value="PomBase"/>
</dbReference>
<dbReference type="GO" id="GO:0002161">
    <property type="term" value="F:aminoacyl-tRNA deacylase activity"/>
    <property type="evidence" value="ECO:0007669"/>
    <property type="project" value="InterPro"/>
</dbReference>
<dbReference type="GO" id="GO:0005524">
    <property type="term" value="F:ATP binding"/>
    <property type="evidence" value="ECO:0000255"/>
    <property type="project" value="PomBase"/>
</dbReference>
<dbReference type="GO" id="GO:0004832">
    <property type="term" value="F:valine-tRNA ligase activity"/>
    <property type="evidence" value="ECO:0000314"/>
    <property type="project" value="PomBase"/>
</dbReference>
<dbReference type="GO" id="GO:0070185">
    <property type="term" value="P:mitochondrial valyl-tRNA aminoacylation"/>
    <property type="evidence" value="ECO:0000269"/>
    <property type="project" value="PomBase"/>
</dbReference>
<dbReference type="GO" id="GO:0006438">
    <property type="term" value="P:valyl-tRNA aminoacylation"/>
    <property type="evidence" value="ECO:0000318"/>
    <property type="project" value="GO_Central"/>
</dbReference>
<dbReference type="CDD" id="cd07962">
    <property type="entry name" value="Anticodon_Ia_Val"/>
    <property type="match status" value="1"/>
</dbReference>
<dbReference type="CDD" id="cd00817">
    <property type="entry name" value="ValRS_core"/>
    <property type="match status" value="1"/>
</dbReference>
<dbReference type="FunFam" id="3.90.740.10:FF:000005">
    <property type="entry name" value="Valine--tRNA ligase, mitochondrial"/>
    <property type="match status" value="1"/>
</dbReference>
<dbReference type="Gene3D" id="2.170.220.10">
    <property type="match status" value="1"/>
</dbReference>
<dbReference type="Gene3D" id="3.40.50.620">
    <property type="entry name" value="HUPs"/>
    <property type="match status" value="2"/>
</dbReference>
<dbReference type="Gene3D" id="1.10.730.10">
    <property type="entry name" value="Isoleucyl-tRNA Synthetase, Domain 1"/>
    <property type="match status" value="1"/>
</dbReference>
<dbReference type="Gene3D" id="3.90.740.10">
    <property type="entry name" value="Valyl/Leucyl/Isoleucyl-tRNA synthetase, editing domain"/>
    <property type="match status" value="1"/>
</dbReference>
<dbReference type="InterPro" id="IPR001412">
    <property type="entry name" value="aa-tRNA-synth_I_CS"/>
</dbReference>
<dbReference type="InterPro" id="IPR002300">
    <property type="entry name" value="aa-tRNA-synth_Ia"/>
</dbReference>
<dbReference type="InterPro" id="IPR033705">
    <property type="entry name" value="Anticodon_Ia_Val"/>
</dbReference>
<dbReference type="InterPro" id="IPR013155">
    <property type="entry name" value="M/V/L/I-tRNA-synth_anticd-bd"/>
</dbReference>
<dbReference type="InterPro" id="IPR014729">
    <property type="entry name" value="Rossmann-like_a/b/a_fold"/>
</dbReference>
<dbReference type="InterPro" id="IPR009080">
    <property type="entry name" value="tRNAsynth_Ia_anticodon-bd"/>
</dbReference>
<dbReference type="InterPro" id="IPR009008">
    <property type="entry name" value="Val/Leu/Ile-tRNA-synth_edit"/>
</dbReference>
<dbReference type="InterPro" id="IPR002303">
    <property type="entry name" value="Valyl-tRNA_ligase"/>
</dbReference>
<dbReference type="NCBIfam" id="NF004349">
    <property type="entry name" value="PRK05729.1"/>
    <property type="match status" value="1"/>
</dbReference>
<dbReference type="NCBIfam" id="TIGR00422">
    <property type="entry name" value="valS"/>
    <property type="match status" value="1"/>
</dbReference>
<dbReference type="PANTHER" id="PTHR11946:SF114">
    <property type="entry name" value="VALINE--TRNA LIGASE, MITOCHONDRIAL"/>
    <property type="match status" value="1"/>
</dbReference>
<dbReference type="PANTHER" id="PTHR11946">
    <property type="entry name" value="VALYL-TRNA SYNTHETASES"/>
    <property type="match status" value="1"/>
</dbReference>
<dbReference type="Pfam" id="PF08264">
    <property type="entry name" value="Anticodon_1"/>
    <property type="match status" value="1"/>
</dbReference>
<dbReference type="Pfam" id="PF00133">
    <property type="entry name" value="tRNA-synt_1"/>
    <property type="match status" value="1"/>
</dbReference>
<dbReference type="PRINTS" id="PR00986">
    <property type="entry name" value="TRNASYNTHVAL"/>
</dbReference>
<dbReference type="SUPFAM" id="SSF47323">
    <property type="entry name" value="Anticodon-binding domain of a subclass of class I aminoacyl-tRNA synthetases"/>
    <property type="match status" value="1"/>
</dbReference>
<dbReference type="SUPFAM" id="SSF52374">
    <property type="entry name" value="Nucleotidylyl transferase"/>
    <property type="match status" value="1"/>
</dbReference>
<dbReference type="SUPFAM" id="SSF50677">
    <property type="entry name" value="ValRS/IleRS/LeuRS editing domain"/>
    <property type="match status" value="1"/>
</dbReference>
<dbReference type="PROSITE" id="PS00178">
    <property type="entry name" value="AA_TRNA_LIGASE_I"/>
    <property type="match status" value="1"/>
</dbReference>
<name>SYVM_SCHPO</name>
<gene>
    <name type="primary">vas1</name>
    <name type="ORF">SPAC4A8.08c</name>
</gene>
<accession>O14160</accession>
<sequence>MFHFQRSFSSRKAHGLLSFKNRNYIHIEAPFDIAAIQDGWNIIRKHIHYPKPKSIEAPMFPILLPPPNITGKLHIGHALTITIQDALARFYAMHGYKVSFRPGTDHAGIATQSVVEKYLQKKGVYRNQLSKDELLSSIHSWQVKYQKSIINQLKSFEAIFDWDNIFYTMDQNRSEAVNEAFISLFNAGLIYRANRFVNWCPKLESAVSDIEVESQQINKPVTKYVDNTPVEFGWLYEISYQLEGSDNEQLNVSTTRPETIFGDRAIAVSPHDERYKKYVGRFVKHPLIDDLLIPVICDNAVDRHFGTGVLKITPMHSIVDYEIAKRHNIDCVSIMDKSGNLINCSKEVNGMNRLKARSKIVRLLQQRNRLVEQVPHSLILSVCSRTGDVIEPVMVPQWYLSVDSLKKEVLKSSNKLKLVPSLARKEWDSWFKKMGDWCISRQIWWGHQIPVWKILEEDKWIAAPNYEKALQLSVGKSVSQDSDVLDTWFSSALLPLSAFGWPKSKDIQPLPFIESGQDILFFWIARMALLCKYFSNELPFKEIILHPLVRDSEGRKMSKSLGNVIDPMDIINGVTLENMKKALLEGNLPISEVHKSSKQMEKAFPNGIPAQGIDIFRYGLFLCLHHEQRILLDMNSFSDAHRFVSKLWNLARYFNQYKDKENPLKLTDSQRQRISLLKMATYSKLHHAVEGVKESFEQRKFFNAADIMKNFLLNDLSSVYVELTRFDVKDSKSSAYEVYRVFSDILHIFLKLIHPIVPCISGVMLHSKIIPERKNSEFLSFPTSQQECLLVHDNQAEVVVQNAYDVLIQLRKLESPLNKSPSREHTVYISTSLEPLKYFYDAIEQSTNLKLKSISQEDTIDLMRNQTFILSRISSDTILLVPKKLYPSKRKKLRKNLDDLQKKLDKIQHTTSSSGYEKAPSYIKLKNCELQKDILVKIQDIKQALLNTEI</sequence>
<organism>
    <name type="scientific">Schizosaccharomyces pombe (strain 972 / ATCC 24843)</name>
    <name type="common">Fission yeast</name>
    <dbReference type="NCBI Taxonomy" id="284812"/>
    <lineage>
        <taxon>Eukaryota</taxon>
        <taxon>Fungi</taxon>
        <taxon>Dikarya</taxon>
        <taxon>Ascomycota</taxon>
        <taxon>Taphrinomycotina</taxon>
        <taxon>Schizosaccharomycetes</taxon>
        <taxon>Schizosaccharomycetales</taxon>
        <taxon>Schizosaccharomycetaceae</taxon>
        <taxon>Schizosaccharomyces</taxon>
    </lineage>
</organism>
<protein>
    <recommendedName>
        <fullName>Valine--tRNA ligase, mitochondrial</fullName>
        <ecNumber>6.1.1.9</ecNumber>
    </recommendedName>
    <alternativeName>
        <fullName>Valyl-tRNA synthetase</fullName>
        <shortName>ValRS</shortName>
    </alternativeName>
</protein>
<reference key="1">
    <citation type="journal article" date="2002" name="Nature">
        <title>The genome sequence of Schizosaccharomyces pombe.</title>
        <authorList>
            <person name="Wood V."/>
            <person name="Gwilliam R."/>
            <person name="Rajandream M.A."/>
            <person name="Lyne M.H."/>
            <person name="Lyne R."/>
            <person name="Stewart A."/>
            <person name="Sgouros J.G."/>
            <person name="Peat N."/>
            <person name="Hayles J."/>
            <person name="Baker S.G."/>
            <person name="Basham D."/>
            <person name="Bowman S."/>
            <person name="Brooks K."/>
            <person name="Brown D."/>
            <person name="Brown S."/>
            <person name="Chillingworth T."/>
            <person name="Churcher C.M."/>
            <person name="Collins M."/>
            <person name="Connor R."/>
            <person name="Cronin A."/>
            <person name="Davis P."/>
            <person name="Feltwell T."/>
            <person name="Fraser A."/>
            <person name="Gentles S."/>
            <person name="Goble A."/>
            <person name="Hamlin N."/>
            <person name="Harris D.E."/>
            <person name="Hidalgo J."/>
            <person name="Hodgson G."/>
            <person name="Holroyd S."/>
            <person name="Hornsby T."/>
            <person name="Howarth S."/>
            <person name="Huckle E.J."/>
            <person name="Hunt S."/>
            <person name="Jagels K."/>
            <person name="James K.D."/>
            <person name="Jones L."/>
            <person name="Jones M."/>
            <person name="Leather S."/>
            <person name="McDonald S."/>
            <person name="McLean J."/>
            <person name="Mooney P."/>
            <person name="Moule S."/>
            <person name="Mungall K.L."/>
            <person name="Murphy L.D."/>
            <person name="Niblett D."/>
            <person name="Odell C."/>
            <person name="Oliver K."/>
            <person name="O'Neil S."/>
            <person name="Pearson D."/>
            <person name="Quail M.A."/>
            <person name="Rabbinowitsch E."/>
            <person name="Rutherford K.M."/>
            <person name="Rutter S."/>
            <person name="Saunders D."/>
            <person name="Seeger K."/>
            <person name="Sharp S."/>
            <person name="Skelton J."/>
            <person name="Simmonds M.N."/>
            <person name="Squares R."/>
            <person name="Squares S."/>
            <person name="Stevens K."/>
            <person name="Taylor K."/>
            <person name="Taylor R.G."/>
            <person name="Tivey A."/>
            <person name="Walsh S.V."/>
            <person name="Warren T."/>
            <person name="Whitehead S."/>
            <person name="Woodward J.R."/>
            <person name="Volckaert G."/>
            <person name="Aert R."/>
            <person name="Robben J."/>
            <person name="Grymonprez B."/>
            <person name="Weltjens I."/>
            <person name="Vanstreels E."/>
            <person name="Rieger M."/>
            <person name="Schaefer M."/>
            <person name="Mueller-Auer S."/>
            <person name="Gabel C."/>
            <person name="Fuchs M."/>
            <person name="Duesterhoeft A."/>
            <person name="Fritzc C."/>
            <person name="Holzer E."/>
            <person name="Moestl D."/>
            <person name="Hilbert H."/>
            <person name="Borzym K."/>
            <person name="Langer I."/>
            <person name="Beck A."/>
            <person name="Lehrach H."/>
            <person name="Reinhardt R."/>
            <person name="Pohl T.M."/>
            <person name="Eger P."/>
            <person name="Zimmermann W."/>
            <person name="Wedler H."/>
            <person name="Wambutt R."/>
            <person name="Purnelle B."/>
            <person name="Goffeau A."/>
            <person name="Cadieu E."/>
            <person name="Dreano S."/>
            <person name="Gloux S."/>
            <person name="Lelaure V."/>
            <person name="Mottier S."/>
            <person name="Galibert F."/>
            <person name="Aves S.J."/>
            <person name="Xiang Z."/>
            <person name="Hunt C."/>
            <person name="Moore K."/>
            <person name="Hurst S.M."/>
            <person name="Lucas M."/>
            <person name="Rochet M."/>
            <person name="Gaillardin C."/>
            <person name="Tallada V.A."/>
            <person name="Garzon A."/>
            <person name="Thode G."/>
            <person name="Daga R.R."/>
            <person name="Cruzado L."/>
            <person name="Jimenez J."/>
            <person name="Sanchez M."/>
            <person name="del Rey F."/>
            <person name="Benito J."/>
            <person name="Dominguez A."/>
            <person name="Revuelta J.L."/>
            <person name="Moreno S."/>
            <person name="Armstrong J."/>
            <person name="Forsburg S.L."/>
            <person name="Cerutti L."/>
            <person name="Lowe T."/>
            <person name="McCombie W.R."/>
            <person name="Paulsen I."/>
            <person name="Potashkin J."/>
            <person name="Shpakovski G.V."/>
            <person name="Ussery D."/>
            <person name="Barrell B.G."/>
            <person name="Nurse P."/>
        </authorList>
    </citation>
    <scope>NUCLEOTIDE SEQUENCE [LARGE SCALE GENOMIC DNA]</scope>
    <source>
        <strain>972 / ATCC 24843</strain>
    </source>
</reference>
<reference key="2">
    <citation type="journal article" date="2006" name="Nat. Biotechnol.">
        <title>ORFeome cloning and global analysis of protein localization in the fission yeast Schizosaccharomyces pombe.</title>
        <authorList>
            <person name="Matsuyama A."/>
            <person name="Arai R."/>
            <person name="Yashiroda Y."/>
            <person name="Shirai A."/>
            <person name="Kamata A."/>
            <person name="Sekido S."/>
            <person name="Kobayashi Y."/>
            <person name="Hashimoto A."/>
            <person name="Hamamoto M."/>
            <person name="Hiraoka Y."/>
            <person name="Horinouchi S."/>
            <person name="Yoshida M."/>
        </authorList>
    </citation>
    <scope>SUBCELLULAR LOCATION [LARGE SCALE ANALYSIS]</scope>
</reference>